<proteinExistence type="evidence at protein level"/>
<protein>
    <recommendedName>
        <fullName>Pecanex-like protein 3</fullName>
    </recommendedName>
    <alternativeName>
        <fullName evidence="8">Pecanex homolog protein 3</fullName>
    </alternativeName>
</protein>
<reference key="1">
    <citation type="journal article" date="2007" name="BMC Genomics">
        <title>The full-ORF clone resource of the German cDNA consortium.</title>
        <authorList>
            <person name="Bechtel S."/>
            <person name="Rosenfelder H."/>
            <person name="Duda A."/>
            <person name="Schmidt C.P."/>
            <person name="Ernst U."/>
            <person name="Wellenreuther R."/>
            <person name="Mehrle A."/>
            <person name="Schuster C."/>
            <person name="Bahr A."/>
            <person name="Bloecker H."/>
            <person name="Heubner D."/>
            <person name="Hoerlein A."/>
            <person name="Michel G."/>
            <person name="Wedler H."/>
            <person name="Koehrer K."/>
            <person name="Ottenwaelder B."/>
            <person name="Poustka A."/>
            <person name="Wiemann S."/>
            <person name="Schupp I."/>
        </authorList>
    </citation>
    <scope>NUCLEOTIDE SEQUENCE [LARGE SCALE MRNA] (ISOFORM 3)</scope>
    <source>
        <tissue>Esophageal carcinoma</tissue>
    </source>
</reference>
<reference key="2">
    <citation type="journal article" date="2006" name="Nature">
        <title>Human chromosome 11 DNA sequence and analysis including novel gene identification.</title>
        <authorList>
            <person name="Taylor T.D."/>
            <person name="Noguchi H."/>
            <person name="Totoki Y."/>
            <person name="Toyoda A."/>
            <person name="Kuroki Y."/>
            <person name="Dewar K."/>
            <person name="Lloyd C."/>
            <person name="Itoh T."/>
            <person name="Takeda T."/>
            <person name="Kim D.-W."/>
            <person name="She X."/>
            <person name="Barlow K.F."/>
            <person name="Bloom T."/>
            <person name="Bruford E."/>
            <person name="Chang J.L."/>
            <person name="Cuomo C.A."/>
            <person name="Eichler E."/>
            <person name="FitzGerald M.G."/>
            <person name="Jaffe D.B."/>
            <person name="LaButti K."/>
            <person name="Nicol R."/>
            <person name="Park H.-S."/>
            <person name="Seaman C."/>
            <person name="Sougnez C."/>
            <person name="Yang X."/>
            <person name="Zimmer A.R."/>
            <person name="Zody M.C."/>
            <person name="Birren B.W."/>
            <person name="Nusbaum C."/>
            <person name="Fujiyama A."/>
            <person name="Hattori M."/>
            <person name="Rogers J."/>
            <person name="Lander E.S."/>
            <person name="Sakaki Y."/>
        </authorList>
    </citation>
    <scope>NUCLEOTIDE SEQUENCE [LARGE SCALE GENOMIC DNA]</scope>
</reference>
<reference key="3">
    <citation type="journal article" date="2004" name="Nat. Genet.">
        <title>Complete sequencing and characterization of 21,243 full-length human cDNAs.</title>
        <authorList>
            <person name="Ota T."/>
            <person name="Suzuki Y."/>
            <person name="Nishikawa T."/>
            <person name="Otsuki T."/>
            <person name="Sugiyama T."/>
            <person name="Irie R."/>
            <person name="Wakamatsu A."/>
            <person name="Hayashi K."/>
            <person name="Sato H."/>
            <person name="Nagai K."/>
            <person name="Kimura K."/>
            <person name="Makita H."/>
            <person name="Sekine M."/>
            <person name="Obayashi M."/>
            <person name="Nishi T."/>
            <person name="Shibahara T."/>
            <person name="Tanaka T."/>
            <person name="Ishii S."/>
            <person name="Yamamoto J."/>
            <person name="Saito K."/>
            <person name="Kawai Y."/>
            <person name="Isono Y."/>
            <person name="Nakamura Y."/>
            <person name="Nagahari K."/>
            <person name="Murakami K."/>
            <person name="Yasuda T."/>
            <person name="Iwayanagi T."/>
            <person name="Wagatsuma M."/>
            <person name="Shiratori A."/>
            <person name="Sudo H."/>
            <person name="Hosoiri T."/>
            <person name="Kaku Y."/>
            <person name="Kodaira H."/>
            <person name="Kondo H."/>
            <person name="Sugawara M."/>
            <person name="Takahashi M."/>
            <person name="Kanda K."/>
            <person name="Yokoi T."/>
            <person name="Furuya T."/>
            <person name="Kikkawa E."/>
            <person name="Omura Y."/>
            <person name="Abe K."/>
            <person name="Kamihara K."/>
            <person name="Katsuta N."/>
            <person name="Sato K."/>
            <person name="Tanikawa M."/>
            <person name="Yamazaki M."/>
            <person name="Ninomiya K."/>
            <person name="Ishibashi T."/>
            <person name="Yamashita H."/>
            <person name="Murakawa K."/>
            <person name="Fujimori K."/>
            <person name="Tanai H."/>
            <person name="Kimata M."/>
            <person name="Watanabe M."/>
            <person name="Hiraoka S."/>
            <person name="Chiba Y."/>
            <person name="Ishida S."/>
            <person name="Ono Y."/>
            <person name="Takiguchi S."/>
            <person name="Watanabe S."/>
            <person name="Yosida M."/>
            <person name="Hotuta T."/>
            <person name="Kusano J."/>
            <person name="Kanehori K."/>
            <person name="Takahashi-Fujii A."/>
            <person name="Hara H."/>
            <person name="Tanase T.-O."/>
            <person name="Nomura Y."/>
            <person name="Togiya S."/>
            <person name="Komai F."/>
            <person name="Hara R."/>
            <person name="Takeuchi K."/>
            <person name="Arita M."/>
            <person name="Imose N."/>
            <person name="Musashino K."/>
            <person name="Yuuki H."/>
            <person name="Oshima A."/>
            <person name="Sasaki N."/>
            <person name="Aotsuka S."/>
            <person name="Yoshikawa Y."/>
            <person name="Matsunawa H."/>
            <person name="Ichihara T."/>
            <person name="Shiohata N."/>
            <person name="Sano S."/>
            <person name="Moriya S."/>
            <person name="Momiyama H."/>
            <person name="Satoh N."/>
            <person name="Takami S."/>
            <person name="Terashima Y."/>
            <person name="Suzuki O."/>
            <person name="Nakagawa S."/>
            <person name="Senoh A."/>
            <person name="Mizoguchi H."/>
            <person name="Goto Y."/>
            <person name="Shimizu F."/>
            <person name="Wakebe H."/>
            <person name="Hishigaki H."/>
            <person name="Watanabe T."/>
            <person name="Sugiyama A."/>
            <person name="Takemoto M."/>
            <person name="Kawakami B."/>
            <person name="Yamazaki M."/>
            <person name="Watanabe K."/>
            <person name="Kumagai A."/>
            <person name="Itakura S."/>
            <person name="Fukuzumi Y."/>
            <person name="Fujimori Y."/>
            <person name="Komiyama M."/>
            <person name="Tashiro H."/>
            <person name="Tanigami A."/>
            <person name="Fujiwara T."/>
            <person name="Ono T."/>
            <person name="Yamada K."/>
            <person name="Fujii Y."/>
            <person name="Ozaki K."/>
            <person name="Hirao M."/>
            <person name="Ohmori Y."/>
            <person name="Kawabata A."/>
            <person name="Hikiji T."/>
            <person name="Kobatake N."/>
            <person name="Inagaki H."/>
            <person name="Ikema Y."/>
            <person name="Okamoto S."/>
            <person name="Okitani R."/>
            <person name="Kawakami T."/>
            <person name="Noguchi S."/>
            <person name="Itoh T."/>
            <person name="Shigeta K."/>
            <person name="Senba T."/>
            <person name="Matsumura K."/>
            <person name="Nakajima Y."/>
            <person name="Mizuno T."/>
            <person name="Morinaga M."/>
            <person name="Sasaki M."/>
            <person name="Togashi T."/>
            <person name="Oyama M."/>
            <person name="Hata H."/>
            <person name="Watanabe M."/>
            <person name="Komatsu T."/>
            <person name="Mizushima-Sugano J."/>
            <person name="Satoh T."/>
            <person name="Shirai Y."/>
            <person name="Takahashi Y."/>
            <person name="Nakagawa K."/>
            <person name="Okumura K."/>
            <person name="Nagase T."/>
            <person name="Nomura N."/>
            <person name="Kikuchi H."/>
            <person name="Masuho Y."/>
            <person name="Yamashita R."/>
            <person name="Nakai K."/>
            <person name="Yada T."/>
            <person name="Nakamura Y."/>
            <person name="Ohara O."/>
            <person name="Isogai T."/>
            <person name="Sugano S."/>
        </authorList>
    </citation>
    <scope>NUCLEOTIDE SEQUENCE [LARGE SCALE MRNA] OF 107-2034 (ISOFORM 2)</scope>
    <scope>VARIANT ARG-258</scope>
</reference>
<reference key="4">
    <citation type="journal article" date="2010" name="Sci. Signal.">
        <title>Quantitative phosphoproteomics reveals widespread full phosphorylation site occupancy during mitosis.</title>
        <authorList>
            <person name="Olsen J.V."/>
            <person name="Vermeulen M."/>
            <person name="Santamaria A."/>
            <person name="Kumar C."/>
            <person name="Miller M.L."/>
            <person name="Jensen L.J."/>
            <person name="Gnad F."/>
            <person name="Cox J."/>
            <person name="Jensen T.S."/>
            <person name="Nigg E.A."/>
            <person name="Brunak S."/>
            <person name="Mann M."/>
        </authorList>
    </citation>
    <scope>PHOSPHORYLATION [LARGE SCALE ANALYSIS] AT THR-370</scope>
    <scope>IDENTIFICATION BY MASS SPECTROMETRY [LARGE SCALE ANALYSIS]</scope>
    <source>
        <tissue>Cervix carcinoma</tissue>
    </source>
</reference>
<reference key="5">
    <citation type="journal article" date="2013" name="J. Proteome Res.">
        <title>Toward a comprehensive characterization of a human cancer cell phosphoproteome.</title>
        <authorList>
            <person name="Zhou H."/>
            <person name="Di Palma S."/>
            <person name="Preisinger C."/>
            <person name="Peng M."/>
            <person name="Polat A.N."/>
            <person name="Heck A.J."/>
            <person name="Mohammed S."/>
        </authorList>
    </citation>
    <scope>PHOSPHORYLATION [LARGE SCALE ANALYSIS] AT THR-129; THR-370; SER-392; SER-505; SER-1025; SER-1697; SER-1909 AND SER-1955</scope>
    <scope>IDENTIFICATION BY MASS SPECTROMETRY [LARGE SCALE ANALYSIS]</scope>
    <source>
        <tissue>Cervix carcinoma</tissue>
        <tissue>Erythroleukemia</tissue>
    </source>
</reference>
<evidence type="ECO:0000250" key="1">
    <source>
        <dbReference type="UniProtKB" id="Q8VI59"/>
    </source>
</evidence>
<evidence type="ECO:0000255" key="2"/>
<evidence type="ECO:0000256" key="3">
    <source>
        <dbReference type="SAM" id="MobiDB-lite"/>
    </source>
</evidence>
<evidence type="ECO:0000269" key="4">
    <source>
    </source>
</evidence>
<evidence type="ECO:0000303" key="5">
    <source>
    </source>
</evidence>
<evidence type="ECO:0000303" key="6">
    <source>
    </source>
</evidence>
<evidence type="ECO:0000305" key="7"/>
<evidence type="ECO:0000312" key="8">
    <source>
        <dbReference type="HGNC" id="HGNC:18760"/>
    </source>
</evidence>
<evidence type="ECO:0007744" key="9">
    <source>
    </source>
</evidence>
<evidence type="ECO:0007744" key="10">
    <source>
    </source>
</evidence>
<accession>Q9H6A9</accession>
<accession>Q6MZN8</accession>
<organism>
    <name type="scientific">Homo sapiens</name>
    <name type="common">Human</name>
    <dbReference type="NCBI Taxonomy" id="9606"/>
    <lineage>
        <taxon>Eukaryota</taxon>
        <taxon>Metazoa</taxon>
        <taxon>Chordata</taxon>
        <taxon>Craniata</taxon>
        <taxon>Vertebrata</taxon>
        <taxon>Euteleostomi</taxon>
        <taxon>Mammalia</taxon>
        <taxon>Eutheria</taxon>
        <taxon>Euarchontoglires</taxon>
        <taxon>Primates</taxon>
        <taxon>Haplorrhini</taxon>
        <taxon>Catarrhini</taxon>
        <taxon>Hominidae</taxon>
        <taxon>Homo</taxon>
    </lineage>
</organism>
<dbReference type="EMBL" id="BX640978">
    <property type="protein sequence ID" value="CAE45990.2"/>
    <property type="molecule type" value="mRNA"/>
</dbReference>
<dbReference type="EMBL" id="AP001362">
    <property type="status" value="NOT_ANNOTATED_CDS"/>
    <property type="molecule type" value="Genomic_DNA"/>
</dbReference>
<dbReference type="EMBL" id="AK026080">
    <property type="protein sequence ID" value="BAB15353.1"/>
    <property type="status" value="ALT_INIT"/>
    <property type="molecule type" value="mRNA"/>
</dbReference>
<dbReference type="CCDS" id="CCDS44650.1">
    <molecule id="Q9H6A9-1"/>
</dbReference>
<dbReference type="RefSeq" id="NP_115599.2">
    <molecule id="Q9H6A9-1"/>
    <property type="nucleotide sequence ID" value="NM_032223.3"/>
</dbReference>
<dbReference type="BioGRID" id="134447">
    <property type="interactions" value="83"/>
</dbReference>
<dbReference type="FunCoup" id="Q9H6A9">
    <property type="interactions" value="2523"/>
</dbReference>
<dbReference type="IntAct" id="Q9H6A9">
    <property type="interactions" value="53"/>
</dbReference>
<dbReference type="MINT" id="Q9H6A9"/>
<dbReference type="STRING" id="9606.ENSP00000347931"/>
<dbReference type="GlyCosmos" id="Q9H6A9">
    <property type="glycosylation" value="2 sites, No reported glycans"/>
</dbReference>
<dbReference type="GlyGen" id="Q9H6A9">
    <property type="glycosylation" value="3 sites"/>
</dbReference>
<dbReference type="iPTMnet" id="Q9H6A9"/>
<dbReference type="PhosphoSitePlus" id="Q9H6A9"/>
<dbReference type="SwissPalm" id="Q9H6A9"/>
<dbReference type="BioMuta" id="PCNX3"/>
<dbReference type="DMDM" id="187471100"/>
<dbReference type="jPOST" id="Q9H6A9"/>
<dbReference type="MassIVE" id="Q9H6A9"/>
<dbReference type="PaxDb" id="9606-ENSP00000347931"/>
<dbReference type="PeptideAtlas" id="Q9H6A9"/>
<dbReference type="ProteomicsDB" id="80969">
    <molecule id="Q9H6A9-1"/>
</dbReference>
<dbReference type="ProteomicsDB" id="80970">
    <molecule id="Q9H6A9-2"/>
</dbReference>
<dbReference type="ProteomicsDB" id="80971">
    <molecule id="Q9H6A9-3"/>
</dbReference>
<dbReference type="Pumba" id="Q9H6A9"/>
<dbReference type="Antibodypedia" id="7459">
    <property type="antibodies" value="15 antibodies from 9 providers"/>
</dbReference>
<dbReference type="DNASU" id="399909"/>
<dbReference type="Ensembl" id="ENST00000355703.4">
    <molecule id="Q9H6A9-1"/>
    <property type="protein sequence ID" value="ENSP00000347931.3"/>
    <property type="gene ID" value="ENSG00000197136.5"/>
</dbReference>
<dbReference type="GeneID" id="399909"/>
<dbReference type="KEGG" id="hsa:399909"/>
<dbReference type="MANE-Select" id="ENST00000355703.4">
    <property type="protein sequence ID" value="ENSP00000347931.3"/>
    <property type="RefSeq nucleotide sequence ID" value="NM_032223.4"/>
    <property type="RefSeq protein sequence ID" value="NP_115599.2"/>
</dbReference>
<dbReference type="UCSC" id="uc001oey.3">
    <molecule id="Q9H6A9-1"/>
    <property type="organism name" value="human"/>
</dbReference>
<dbReference type="AGR" id="HGNC:18760"/>
<dbReference type="CTD" id="399909"/>
<dbReference type="DisGeNET" id="399909"/>
<dbReference type="GeneCards" id="PCNX3"/>
<dbReference type="HGNC" id="HGNC:18760">
    <property type="gene designation" value="PCNX3"/>
</dbReference>
<dbReference type="HPA" id="ENSG00000197136">
    <property type="expression patterns" value="Low tissue specificity"/>
</dbReference>
<dbReference type="MIM" id="617657">
    <property type="type" value="gene"/>
</dbReference>
<dbReference type="neXtProt" id="NX_Q9H6A9"/>
<dbReference type="OpenTargets" id="ENSG00000197136"/>
<dbReference type="PharmGKB" id="PA38680"/>
<dbReference type="VEuPathDB" id="HostDB:ENSG00000197136"/>
<dbReference type="eggNOG" id="KOG3604">
    <property type="taxonomic scope" value="Eukaryota"/>
</dbReference>
<dbReference type="GeneTree" id="ENSGT00940000158735"/>
<dbReference type="HOGENOM" id="CLU_000602_0_1_1"/>
<dbReference type="InParanoid" id="Q9H6A9"/>
<dbReference type="OMA" id="QSWPHHP"/>
<dbReference type="OrthoDB" id="10037631at2759"/>
<dbReference type="PAN-GO" id="Q9H6A9">
    <property type="GO annotations" value="0 GO annotations based on evolutionary models"/>
</dbReference>
<dbReference type="PhylomeDB" id="Q9H6A9"/>
<dbReference type="TreeFam" id="TF313570"/>
<dbReference type="PathwayCommons" id="Q9H6A9"/>
<dbReference type="SignaLink" id="Q9H6A9"/>
<dbReference type="BioGRID-ORCS" id="399909">
    <property type="hits" value="106 hits in 1139 CRISPR screens"/>
</dbReference>
<dbReference type="ChiTaRS" id="PCNX3">
    <property type="organism name" value="human"/>
</dbReference>
<dbReference type="GenomeRNAi" id="399909"/>
<dbReference type="Pharos" id="Q9H6A9">
    <property type="development level" value="Tdark"/>
</dbReference>
<dbReference type="PRO" id="PR:Q9H6A9"/>
<dbReference type="Proteomes" id="UP000005640">
    <property type="component" value="Chromosome 11"/>
</dbReference>
<dbReference type="RNAct" id="Q9H6A9">
    <property type="molecule type" value="protein"/>
</dbReference>
<dbReference type="Bgee" id="ENSG00000197136">
    <property type="expression patterns" value="Expressed in granulocyte and 95 other cell types or tissues"/>
</dbReference>
<dbReference type="GO" id="GO:0016020">
    <property type="term" value="C:membrane"/>
    <property type="evidence" value="ECO:0007669"/>
    <property type="project" value="UniProtKB-SubCell"/>
</dbReference>
<dbReference type="InterPro" id="IPR039797">
    <property type="entry name" value="Pecanex"/>
</dbReference>
<dbReference type="InterPro" id="IPR007735">
    <property type="entry name" value="Pecanex_C"/>
</dbReference>
<dbReference type="PANTHER" id="PTHR12372">
    <property type="entry name" value="PECANEX"/>
    <property type="match status" value="1"/>
</dbReference>
<dbReference type="PANTHER" id="PTHR12372:SF4">
    <property type="entry name" value="PECANEX-LIKE PROTEIN 3"/>
    <property type="match status" value="1"/>
</dbReference>
<dbReference type="Pfam" id="PF05041">
    <property type="entry name" value="Pecanex_C"/>
    <property type="match status" value="1"/>
</dbReference>
<comment type="interaction">
    <interactant intactId="EBI-2801983">
        <id>Q9H6A9</id>
    </interactant>
    <interactant intactId="EBI-8636612">
        <id>Q15884</id>
        <label>ENTREP1</label>
    </interactant>
    <organismsDiffer>false</organismsDiffer>
    <experiments>3</experiments>
</comment>
<comment type="subcellular location">
    <subcellularLocation>
        <location evidence="7">Membrane</location>
        <topology evidence="7">Multi-pass membrane protein</topology>
    </subcellularLocation>
</comment>
<comment type="alternative products">
    <event type="alternative splicing"/>
    <isoform>
        <id>Q9H6A9-1</id>
        <name>1</name>
        <sequence type="displayed"/>
    </isoform>
    <isoform>
        <id>Q9H6A9-2</id>
        <name>2</name>
        <sequence type="described" ref="VSP_033242 VSP_033243"/>
    </isoform>
    <isoform>
        <id>Q9H6A9-3</id>
        <name>3</name>
        <sequence type="described" ref="VSP_033244 VSP_033245"/>
    </isoform>
</comment>
<comment type="similarity">
    <text evidence="7">Belongs to the pecanex family.</text>
</comment>
<comment type="sequence caution" evidence="7">
    <conflict type="erroneous initiation">
        <sequence resource="EMBL-CDS" id="BAB15353"/>
    </conflict>
</comment>
<gene>
    <name evidence="8" type="primary">PCNX3</name>
    <name type="synonym">PCNXL3</name>
</gene>
<sequence>MGSQVLQILRQGVWASLTGGWFFDPHQSTFSNCFHLYVWIFLLIFPFLLYMVLPPSLMVAGVYCLVVAVIFATIKTVNYRLHAMFDQGEIVEKRSSTMGELEEEPAQGDSNPPRDPGVEMTVFRKVSSTPPVRCSSQHSVFGFNQVSELLPRMEDSGPLRDIKELVREQGSNNVIVTSADREMLKLSSQEKLIGDLPQTPPGAVPDPSLASTDSSEPSPLAGDGAPWSGSSMADTPMSPLLKGSLSQELSKSFLTLTQPDRALVRTSSRREQRRGAGGYQPLDRRGSGEPTPQKAGSSDSCFSGTDRETLSSFKSEKTNSTHLDSPPGGPAPEGSDTDPPSEAELPASPDAGVPSDDTLRSFDTVIGAGTPPGLAEPLLVVRPKDLALLRPSKRQPPLRRHSPPGRAPRRPLLEGGGFFEDEDTSEGSELSPASSLRSQRRYSTDSSSSTSCYSPESSRGAAGGPRKRRAPHGAEEGTAVPPKRPYGTQRTPSTASAKTHARVLSMDGAGGDVLRPPLAGCKAELEAQVGVEQAASEPVVLPAEARRGPAANQPGWRGELQEEGAVGGAAEETGRRDRSSSVRRTQAIRRRHNAGSNPTPPASVMGSPPSSLQEAQRGRAASHSRALTLPSALHFASSLLLTRAGANVHEACTFDDTSEGAVHYFYDESGVRRSYTFGLAGGGYENPVGQQGEQTANGAWDRHSHSSSFHSADVPEATGGLNLLQPRPVVLQGMQVRRVPLEIPEEQTLMEEAPPRAQHSYKYWLLPGRWTSVRYERLALLALLDRTRGVLENIFGVGLSSLVAFLGYLLLLKGFFTDIWVFQFCLVIASCQYSLLKSVQPDAASPMHGHNWVIAYSRPVYFCICCLLIWLLDALGSAQPFPPVSLYGLTLFSASFFFCARDVATVFTLCFPFVFLLGLLPQVNTCLMYLLEQIDMHGFGGTAATSPLTAVFSLSRSLLAAALLYGFCLGAIKTPWPEQHVPVLFSVFCGLLVALSYHLSRQSSDPTVLWSLIRSKLFPELEERSLETARAEPPDPLPDKMRQSVREVLHSDLVMCVVIAVLTFAISASTVFIALKSVLGFVLYALAGAVGFFTHYLLPQLRKQLPWFCLSQPVLKPLEYSQYEVRGAAQVMWFEKLYAGLQCVEKYLIYPAVVLNALTVDAHTVVSHPDKYCFYCRALLMTVAGLKLLRSAFCCPPQQYLTLAFTVLLFHFDYPRLSQGFLLDYFLMSLLCSKLWDLLYKLRFVLTYIAPWQITWGSAFHAFAQPFAVPHSAMLFVQALLSGLFSTPLNPLLGSAVFIMSYARPLKFWERDYNTKRVDHSNTRLVTQLDRNPGADDNNLNSIFYEHLTRSLQHTLCGDLVLGRWGNYGPGDCFVLASDYLNALVHLIEVGNGLVTFQLRGLEFRGTYCQQREVEAITEGVEEDEGCCCCEPGHLPRVLSFNAAFGQRWLAWEVTASKYVLEGYSISDNNAASMLQVFDLRKILITYYVKSIIYYVSRSPKLEVWLSHEGITAALRPVRVPGYADSDPTFSLSVDEDYDLRLSGLSLPSFCAVHLEWIQYCASRRSQPVDQDWNSPLVTLCFGLCVLGRRALGTASHSMSASLEPFLYGLHALFKGDFRITSPRDEWVFADMDLLHRVVAPGVRMALKLHQDHFTSPDEYEEPAALYDAIAANEERLVISHEGDPAWRSAILSNTPSLLALRHVLDDASDEYKIIMLNRRHLSFRVIKVNRECVRGLWAGQQQELVFLRNRNPERGSIQNAKQALRNMINSSCDQPLGYPIYVSPLTTSLAGSHPQLRALWGGPISLGAIAHWLLRTWERLHKGCGAGCNSGGNVDDSDCSGGGGLTSLSNNPPVAHPTPENTAGNGDQPLPPGPGWGPRSSLSGSGDGRPPPLLQWPPPRLPGPPPASPIPTEGPRTSRPPGPGLLSSEGPSGKWSLGGRKGLGGSDGEPASGSPKGGTPKSQAPLDLSLSLSLSLSPDVSTEASPPRASQDIPCLDSSAPESGTPMGALGDWPAPIEERESPAAQPLLEHQY</sequence>
<keyword id="KW-0025">Alternative splicing</keyword>
<keyword id="KW-0325">Glycoprotein</keyword>
<keyword id="KW-0472">Membrane</keyword>
<keyword id="KW-0597">Phosphoprotein</keyword>
<keyword id="KW-1267">Proteomics identification</keyword>
<keyword id="KW-1185">Reference proteome</keyword>
<keyword id="KW-0812">Transmembrane</keyword>
<keyword id="KW-1133">Transmembrane helix</keyword>
<name>PCX3_HUMAN</name>
<feature type="chain" id="PRO_0000331529" description="Pecanex-like protein 3">
    <location>
        <begin position="1"/>
        <end position="2034"/>
    </location>
</feature>
<feature type="transmembrane region" description="Helical" evidence="2">
    <location>
        <begin position="33"/>
        <end position="53"/>
    </location>
</feature>
<feature type="transmembrane region" description="Helical" evidence="2">
    <location>
        <begin position="54"/>
        <end position="74"/>
    </location>
</feature>
<feature type="transmembrane region" description="Helical" evidence="2">
    <location>
        <begin position="790"/>
        <end position="812"/>
    </location>
</feature>
<feature type="transmembrane region" description="Helical" evidence="2">
    <location>
        <begin position="819"/>
        <end position="836"/>
    </location>
</feature>
<feature type="transmembrane region" description="Helical" evidence="2">
    <location>
        <begin position="852"/>
        <end position="872"/>
    </location>
</feature>
<feature type="transmembrane region" description="Helical" evidence="2">
    <location>
        <begin position="880"/>
        <end position="900"/>
    </location>
</feature>
<feature type="transmembrane region" description="Helical" evidence="2">
    <location>
        <begin position="903"/>
        <end position="923"/>
    </location>
</feature>
<feature type="transmembrane region" description="Helical" evidence="2">
    <location>
        <begin position="946"/>
        <end position="968"/>
    </location>
</feature>
<feature type="transmembrane region" description="Helical" evidence="2">
    <location>
        <begin position="980"/>
        <end position="1000"/>
    </location>
</feature>
<feature type="transmembrane region" description="Helical" evidence="2">
    <location>
        <begin position="1053"/>
        <end position="1073"/>
    </location>
</feature>
<feature type="transmembrane region" description="Helical" evidence="2">
    <location>
        <begin position="1078"/>
        <end position="1098"/>
    </location>
</feature>
<feature type="transmembrane region" description="Helical" evidence="2">
    <location>
        <begin position="1244"/>
        <end position="1264"/>
    </location>
</feature>
<feature type="transmembrane region" description="Helical" evidence="2">
    <location>
        <begin position="1280"/>
        <end position="1300"/>
    </location>
</feature>
<feature type="region of interest" description="Disordered" evidence="3">
    <location>
        <begin position="96"/>
        <end position="118"/>
    </location>
</feature>
<feature type="region of interest" description="Disordered" evidence="3">
    <location>
        <begin position="193"/>
        <end position="242"/>
    </location>
</feature>
<feature type="region of interest" description="Disordered" evidence="3">
    <location>
        <begin position="260"/>
        <end position="517"/>
    </location>
</feature>
<feature type="region of interest" description="Disordered" evidence="3">
    <location>
        <begin position="540"/>
        <end position="625"/>
    </location>
</feature>
<feature type="region of interest" description="Disordered" evidence="3">
    <location>
        <begin position="1844"/>
        <end position="2034"/>
    </location>
</feature>
<feature type="compositionally biased region" description="Polar residues" evidence="3">
    <location>
        <begin position="294"/>
        <end position="303"/>
    </location>
</feature>
<feature type="compositionally biased region" description="Basic and acidic residues" evidence="3">
    <location>
        <begin position="305"/>
        <end position="319"/>
    </location>
</feature>
<feature type="compositionally biased region" description="Basic residues" evidence="3">
    <location>
        <begin position="391"/>
        <end position="409"/>
    </location>
</feature>
<feature type="compositionally biased region" description="Polar residues" evidence="3">
    <location>
        <begin position="427"/>
        <end position="436"/>
    </location>
</feature>
<feature type="compositionally biased region" description="Low complexity" evidence="3">
    <location>
        <begin position="444"/>
        <end position="460"/>
    </location>
</feature>
<feature type="compositionally biased region" description="Polar residues" evidence="3">
    <location>
        <begin position="488"/>
        <end position="497"/>
    </location>
</feature>
<feature type="compositionally biased region" description="Pro residues" evidence="3">
    <location>
        <begin position="1890"/>
        <end position="1910"/>
    </location>
</feature>
<feature type="compositionally biased region" description="Low complexity" evidence="3">
    <location>
        <begin position="1925"/>
        <end position="1939"/>
    </location>
</feature>
<feature type="compositionally biased region" description="Low complexity" evidence="3">
    <location>
        <begin position="1969"/>
        <end position="1978"/>
    </location>
</feature>
<feature type="modified residue" description="Phosphoserine" evidence="1">
    <location>
        <position position="127"/>
    </location>
</feature>
<feature type="modified residue" description="Phosphothreonine" evidence="10">
    <location>
        <position position="129"/>
    </location>
</feature>
<feature type="modified residue" description="Phosphothreonine" evidence="9 10">
    <location>
        <position position="370"/>
    </location>
</feature>
<feature type="modified residue" description="Phosphoserine" evidence="10">
    <location>
        <position position="392"/>
    </location>
</feature>
<feature type="modified residue" description="Phosphoserine" evidence="1">
    <location>
        <position position="431"/>
    </location>
</feature>
<feature type="modified residue" description="Phosphoserine" evidence="10">
    <location>
        <position position="505"/>
    </location>
</feature>
<feature type="modified residue" description="Phosphoserine" evidence="10">
    <location>
        <position position="1025"/>
    </location>
</feature>
<feature type="modified residue" description="Phosphoserine" evidence="10">
    <location>
        <position position="1697"/>
    </location>
</feature>
<feature type="modified residue" description="Phosphoserine" evidence="10">
    <location>
        <position position="1909"/>
    </location>
</feature>
<feature type="modified residue" description="Phosphoserine" evidence="10">
    <location>
        <position position="1955"/>
    </location>
</feature>
<feature type="glycosylation site" description="N-linked (GlcNAc...) asparagine" evidence="2">
    <location>
        <position position="319"/>
    </location>
</feature>
<feature type="glycosylation site" description="N-linked (GlcNAc...) asparagine" evidence="2">
    <location>
        <position position="1770"/>
    </location>
</feature>
<feature type="splice variant" id="VSP_033244" description="In isoform 3." evidence="6">
    <location>
        <begin position="1"/>
        <end position="1113"/>
    </location>
</feature>
<feature type="splice variant" id="VSP_033242" description="In isoform 2." evidence="5">
    <original>LMYLLEQIDMHGFGGTAATSPLTAVFSLSRSLLAAALLYGFCLGAIKTPWPEQHVP</original>
    <variation>PRPRSPPEALPCLHICFALTQFGNSNCPAEVHSPDPFPTLVRVAGFSKPLSGISLC</variation>
    <location>
        <begin position="927"/>
        <end position="982"/>
    </location>
</feature>
<feature type="splice variant" id="VSP_033243" description="In isoform 2." evidence="5">
    <location>
        <begin position="983"/>
        <end position="2034"/>
    </location>
</feature>
<feature type="splice variant" id="VSP_033245" description="In isoform 3." evidence="6">
    <original>VLKPLEYSQYEVR</original>
    <variation>MWKPGAESWPLHT</variation>
    <location>
        <begin position="1114"/>
        <end position="1126"/>
    </location>
</feature>
<feature type="sequence variant" id="VAR_042889" description="In dbSNP:rs1151489." evidence="4">
    <original>Q</original>
    <variation>R</variation>
    <location>
        <position position="258"/>
    </location>
</feature>
<feature type="sequence variant" id="VAR_042890" description="In dbSNP:rs1193851.">
    <original>S</original>
    <variation>C</variation>
    <location>
        <position position="458"/>
    </location>
</feature>
<feature type="sequence variant" id="VAR_061500" description="In dbSNP:rs56232198.">
    <original>G</original>
    <variation>S</variation>
    <location>
        <position position="564"/>
    </location>
</feature>
<feature type="sequence variant" id="VAR_042891" description="In dbSNP:rs1144790.">
    <original>K</original>
    <variation>N</variation>
    <location>
        <position position="813"/>
    </location>
</feature>
<feature type="sequence variant" id="VAR_061501" description="In dbSNP:rs7114037.">
    <original>H</original>
    <variation>Q</variation>
    <location>
        <position position="1822"/>
    </location>
</feature>